<reference key="1">
    <citation type="submission" date="1999-09" db="EMBL/GenBank/DDBJ databases">
        <title>Molecular cloning and characterization of glycolytic gene from Aspergillus oryzae.</title>
        <authorList>
            <person name="Nakajima K."/>
            <person name="Kunihiro S."/>
            <person name="Sano M."/>
            <person name="Eto S."/>
            <person name="Machida M."/>
        </authorList>
    </citation>
    <scope>NUCLEOTIDE SEQUENCE [MRNA]</scope>
    <source>
        <strain>ATCC 42149 / RIB 40</strain>
    </source>
</reference>
<reference key="2">
    <citation type="submission" date="2000-11" db="EMBL/GenBank/DDBJ databases">
        <title>The A.oryzae gpdA gene encoding glyceraldehyde-3-phosphate dehydrogenase (EC 1.2.1.12).</title>
        <authorList>
            <person name="van den Broek P."/>
            <person name="Morandi O."/>
        </authorList>
    </citation>
    <scope>NUCLEOTIDE SEQUENCE [GENOMIC DNA]</scope>
    <source>
        <strain>TK3</strain>
    </source>
</reference>
<reference key="3">
    <citation type="journal article" date="2005" name="Nature">
        <title>Genome sequencing and analysis of Aspergillus oryzae.</title>
        <authorList>
            <person name="Machida M."/>
            <person name="Asai K."/>
            <person name="Sano M."/>
            <person name="Tanaka T."/>
            <person name="Kumagai T."/>
            <person name="Terai G."/>
            <person name="Kusumoto K."/>
            <person name="Arima T."/>
            <person name="Akita O."/>
            <person name="Kashiwagi Y."/>
            <person name="Abe K."/>
            <person name="Gomi K."/>
            <person name="Horiuchi H."/>
            <person name="Kitamoto K."/>
            <person name="Kobayashi T."/>
            <person name="Takeuchi M."/>
            <person name="Denning D.W."/>
            <person name="Galagan J.E."/>
            <person name="Nierman W.C."/>
            <person name="Yu J."/>
            <person name="Archer D.B."/>
            <person name="Bennett J.W."/>
            <person name="Bhatnagar D."/>
            <person name="Cleveland T.E."/>
            <person name="Fedorova N.D."/>
            <person name="Gotoh O."/>
            <person name="Horikawa H."/>
            <person name="Hosoyama A."/>
            <person name="Ichinomiya M."/>
            <person name="Igarashi R."/>
            <person name="Iwashita K."/>
            <person name="Juvvadi P.R."/>
            <person name="Kato M."/>
            <person name="Kato Y."/>
            <person name="Kin T."/>
            <person name="Kokubun A."/>
            <person name="Maeda H."/>
            <person name="Maeyama N."/>
            <person name="Maruyama J."/>
            <person name="Nagasaki H."/>
            <person name="Nakajima T."/>
            <person name="Oda K."/>
            <person name="Okada K."/>
            <person name="Paulsen I."/>
            <person name="Sakamoto K."/>
            <person name="Sawano T."/>
            <person name="Takahashi M."/>
            <person name="Takase K."/>
            <person name="Terabayashi Y."/>
            <person name="Wortman J.R."/>
            <person name="Yamada O."/>
            <person name="Yamagata Y."/>
            <person name="Anazawa H."/>
            <person name="Hata Y."/>
            <person name="Koide Y."/>
            <person name="Komori T."/>
            <person name="Koyama Y."/>
            <person name="Minetoki T."/>
            <person name="Suharnan S."/>
            <person name="Tanaka A."/>
            <person name="Isono K."/>
            <person name="Kuhara S."/>
            <person name="Ogasawara N."/>
            <person name="Kikuchi H."/>
        </authorList>
    </citation>
    <scope>NUCLEOTIDE SEQUENCE [LARGE SCALE GENOMIC DNA]</scope>
    <source>
        <strain>ATCC 42149 / RIB 40</strain>
    </source>
</reference>
<gene>
    <name type="primary">gpdA</name>
    <name type="ORF">AO090003001322</name>
</gene>
<keyword id="KW-0963">Cytoplasm</keyword>
<keyword id="KW-0324">Glycolysis</keyword>
<keyword id="KW-0520">NAD</keyword>
<keyword id="KW-0560">Oxidoreductase</keyword>
<keyword id="KW-1185">Reference proteome</keyword>
<feature type="chain" id="PRO_0000145539" description="Glyceraldehyde-3-phosphate dehydrogenase">
    <location>
        <begin position="1"/>
        <end position="338"/>
    </location>
</feature>
<feature type="active site" description="Nucleophile" evidence="2">
    <location>
        <position position="152"/>
    </location>
</feature>
<feature type="binding site" evidence="1">
    <location>
        <begin position="13"/>
        <end position="14"/>
    </location>
    <ligand>
        <name>NAD(+)</name>
        <dbReference type="ChEBI" id="CHEBI:57540"/>
    </ligand>
</feature>
<feature type="binding site" evidence="1">
    <location>
        <position position="35"/>
    </location>
    <ligand>
        <name>NAD(+)</name>
        <dbReference type="ChEBI" id="CHEBI:57540"/>
    </ligand>
</feature>
<feature type="binding site" evidence="1">
    <location>
        <position position="80"/>
    </location>
    <ligand>
        <name>NAD(+)</name>
        <dbReference type="ChEBI" id="CHEBI:57540"/>
    </ligand>
</feature>
<feature type="binding site" evidence="1">
    <location>
        <begin position="151"/>
        <end position="153"/>
    </location>
    <ligand>
        <name>D-glyceraldehyde 3-phosphate</name>
        <dbReference type="ChEBI" id="CHEBI:59776"/>
    </ligand>
</feature>
<feature type="binding site" evidence="1">
    <location>
        <position position="182"/>
    </location>
    <ligand>
        <name>D-glyceraldehyde 3-phosphate</name>
        <dbReference type="ChEBI" id="CHEBI:59776"/>
    </ligand>
</feature>
<feature type="binding site" evidence="1">
    <location>
        <begin position="211"/>
        <end position="212"/>
    </location>
    <ligand>
        <name>D-glyceraldehyde 3-phosphate</name>
        <dbReference type="ChEBI" id="CHEBI:59776"/>
    </ligand>
</feature>
<feature type="binding site" evidence="1">
    <location>
        <position position="234"/>
    </location>
    <ligand>
        <name>D-glyceraldehyde 3-phosphate</name>
        <dbReference type="ChEBI" id="CHEBI:59776"/>
    </ligand>
</feature>
<feature type="binding site" evidence="1">
    <location>
        <position position="317"/>
    </location>
    <ligand>
        <name>NAD(+)</name>
        <dbReference type="ChEBI" id="CHEBI:57540"/>
    </ligand>
</feature>
<feature type="site" description="Activates thiol group during catalysis" evidence="1">
    <location>
        <position position="179"/>
    </location>
</feature>
<feature type="sequence conflict" description="In Ref. 2; AAK08065." evidence="3" ref="2">
    <original>D</original>
    <variation>N</variation>
    <location>
        <position position="143"/>
    </location>
</feature>
<feature type="sequence conflict" description="In Ref. 2; AAK08065." evidence="3" ref="2">
    <original>N</original>
    <variation>K</variation>
    <location>
        <position position="167"/>
    </location>
</feature>
<sequence length="338" mass="36229">MATPKVGINGFGRIGRIVFRNAIASGDVDVVAVNDPFIETHYAAYMLKYDSTHGRFQGTIETYDEGLIVNGKKIRFFAERDPAAIPWGSAGAAYIVESTGVFTTTEKASAHLKGGAKKVIISAPSADAPMFVMGVNNKEYKTDINVLSNASCTTNCLAPLAKVINDNFGLVEGLMTTVHSYTATQKTVDAPSAKDWRGGRTAAQNIIPSSTGAAKAVGKVIPSLNGKLTGMSMRVPTANVSVVDLTCRTEKAVTYEDIKKTIKAASEEGELKGILGYTEDDIVSTDLIGDAHSSIFDAKAGIALNEHFIKLVSWYDNEWGYSRRVVDLIAYISKVDGQ</sequence>
<comment type="catalytic activity">
    <reaction evidence="2">
        <text>D-glyceraldehyde 3-phosphate + phosphate + NAD(+) = (2R)-3-phospho-glyceroyl phosphate + NADH + H(+)</text>
        <dbReference type="Rhea" id="RHEA:10300"/>
        <dbReference type="ChEBI" id="CHEBI:15378"/>
        <dbReference type="ChEBI" id="CHEBI:43474"/>
        <dbReference type="ChEBI" id="CHEBI:57540"/>
        <dbReference type="ChEBI" id="CHEBI:57604"/>
        <dbReference type="ChEBI" id="CHEBI:57945"/>
        <dbReference type="ChEBI" id="CHEBI:59776"/>
        <dbReference type="EC" id="1.2.1.12"/>
    </reaction>
</comment>
<comment type="pathway">
    <text>Carbohydrate degradation; glycolysis; pyruvate from D-glyceraldehyde 3-phosphate: step 1/5.</text>
</comment>
<comment type="subunit">
    <text evidence="1">Homotetramer.</text>
</comment>
<comment type="subcellular location">
    <subcellularLocation>
        <location evidence="1">Cytoplasm</location>
    </subcellularLocation>
</comment>
<comment type="similarity">
    <text evidence="3">Belongs to the glyceraldehyde-3-phosphate dehydrogenase family.</text>
</comment>
<comment type="sequence caution" evidence="3">
    <conflict type="erroneous gene model prediction">
        <sequence resource="EMBL-CDS" id="BAE58383"/>
    </conflict>
</comment>
<proteinExistence type="evidence at transcript level"/>
<protein>
    <recommendedName>
        <fullName>Glyceraldehyde-3-phosphate dehydrogenase</fullName>
        <shortName>GAPDH</shortName>
        <ecNumber>1.2.1.12</ecNumber>
    </recommendedName>
</protein>
<dbReference type="EC" id="1.2.1.12"/>
<dbReference type="EMBL" id="AB032274">
    <property type="protein sequence ID" value="BAB12234.1"/>
    <property type="molecule type" value="mRNA"/>
</dbReference>
<dbReference type="EMBL" id="AF320304">
    <property type="protein sequence ID" value="AAK08065.1"/>
    <property type="molecule type" value="Genomic_DNA"/>
</dbReference>
<dbReference type="EMBL" id="BA000050">
    <property type="protein sequence ID" value="BAE58383.1"/>
    <property type="status" value="ALT_SEQ"/>
    <property type="molecule type" value="Genomic_DNA"/>
</dbReference>
<dbReference type="RefSeq" id="XP_001820385.2">
    <property type="nucleotide sequence ID" value="XM_001820333.2"/>
</dbReference>
<dbReference type="RefSeq" id="XP_003189631.1">
    <property type="nucleotide sequence ID" value="XM_003189583.1"/>
</dbReference>
<dbReference type="SMR" id="Q9HGY7"/>
<dbReference type="STRING" id="510516.Q9HGY7"/>
<dbReference type="VEuPathDB" id="FungiDB:AO090003001322"/>
<dbReference type="OMA" id="YGYTCNM"/>
<dbReference type="UniPathway" id="UPA00109">
    <property type="reaction ID" value="UER00184"/>
</dbReference>
<dbReference type="Proteomes" id="UP000006564">
    <property type="component" value="Chromosome 2"/>
</dbReference>
<dbReference type="GO" id="GO:0005829">
    <property type="term" value="C:cytosol"/>
    <property type="evidence" value="ECO:0007669"/>
    <property type="project" value="TreeGrafter"/>
</dbReference>
<dbReference type="GO" id="GO:0004365">
    <property type="term" value="F:glyceraldehyde-3-phosphate dehydrogenase (NAD+) (phosphorylating) activity"/>
    <property type="evidence" value="ECO:0007669"/>
    <property type="project" value="UniProtKB-EC"/>
</dbReference>
<dbReference type="GO" id="GO:0051287">
    <property type="term" value="F:NAD binding"/>
    <property type="evidence" value="ECO:0007669"/>
    <property type="project" value="InterPro"/>
</dbReference>
<dbReference type="GO" id="GO:0050661">
    <property type="term" value="F:NADP binding"/>
    <property type="evidence" value="ECO:0007669"/>
    <property type="project" value="InterPro"/>
</dbReference>
<dbReference type="GO" id="GO:0006006">
    <property type="term" value="P:glucose metabolic process"/>
    <property type="evidence" value="ECO:0007669"/>
    <property type="project" value="InterPro"/>
</dbReference>
<dbReference type="GO" id="GO:0006096">
    <property type="term" value="P:glycolytic process"/>
    <property type="evidence" value="ECO:0007669"/>
    <property type="project" value="UniProtKB-UniPathway"/>
</dbReference>
<dbReference type="CDD" id="cd18126">
    <property type="entry name" value="GAPDH_I_C"/>
    <property type="match status" value="1"/>
</dbReference>
<dbReference type="CDD" id="cd05214">
    <property type="entry name" value="GAPDH_I_N"/>
    <property type="match status" value="1"/>
</dbReference>
<dbReference type="FunFam" id="3.30.360.10:FF:000001">
    <property type="entry name" value="Glyceraldehyde-3-phosphate dehydrogenase"/>
    <property type="match status" value="1"/>
</dbReference>
<dbReference type="FunFam" id="3.40.50.720:FF:000020">
    <property type="entry name" value="Glyceraldehyde-3-phosphate dehydrogenase"/>
    <property type="match status" value="1"/>
</dbReference>
<dbReference type="Gene3D" id="3.30.360.10">
    <property type="entry name" value="Dihydrodipicolinate Reductase, domain 2"/>
    <property type="match status" value="1"/>
</dbReference>
<dbReference type="Gene3D" id="3.40.50.720">
    <property type="entry name" value="NAD(P)-binding Rossmann-like Domain"/>
    <property type="match status" value="1"/>
</dbReference>
<dbReference type="InterPro" id="IPR020831">
    <property type="entry name" value="GlycerAld/Erythrose_P_DH"/>
</dbReference>
<dbReference type="InterPro" id="IPR020830">
    <property type="entry name" value="GlycerAld_3-P_DH_AS"/>
</dbReference>
<dbReference type="InterPro" id="IPR020829">
    <property type="entry name" value="GlycerAld_3-P_DH_cat"/>
</dbReference>
<dbReference type="InterPro" id="IPR020828">
    <property type="entry name" value="GlycerAld_3-P_DH_NAD(P)-bd"/>
</dbReference>
<dbReference type="InterPro" id="IPR006424">
    <property type="entry name" value="Glyceraldehyde-3-P_DH_1"/>
</dbReference>
<dbReference type="InterPro" id="IPR036291">
    <property type="entry name" value="NAD(P)-bd_dom_sf"/>
</dbReference>
<dbReference type="NCBIfam" id="TIGR01534">
    <property type="entry name" value="GAPDH-I"/>
    <property type="match status" value="1"/>
</dbReference>
<dbReference type="PANTHER" id="PTHR10836">
    <property type="entry name" value="GLYCERALDEHYDE 3-PHOSPHATE DEHYDROGENASE"/>
    <property type="match status" value="1"/>
</dbReference>
<dbReference type="PANTHER" id="PTHR10836:SF76">
    <property type="entry name" value="GLYCERALDEHYDE-3-PHOSPHATE DEHYDROGENASE-RELATED"/>
    <property type="match status" value="1"/>
</dbReference>
<dbReference type="Pfam" id="PF02800">
    <property type="entry name" value="Gp_dh_C"/>
    <property type="match status" value="1"/>
</dbReference>
<dbReference type="Pfam" id="PF00044">
    <property type="entry name" value="Gp_dh_N"/>
    <property type="match status" value="1"/>
</dbReference>
<dbReference type="PIRSF" id="PIRSF000149">
    <property type="entry name" value="GAP_DH"/>
    <property type="match status" value="1"/>
</dbReference>
<dbReference type="PRINTS" id="PR00078">
    <property type="entry name" value="G3PDHDRGNASE"/>
</dbReference>
<dbReference type="SMART" id="SM00846">
    <property type="entry name" value="Gp_dh_N"/>
    <property type="match status" value="1"/>
</dbReference>
<dbReference type="SUPFAM" id="SSF55347">
    <property type="entry name" value="Glyceraldehyde-3-phosphate dehydrogenase-like, C-terminal domain"/>
    <property type="match status" value="1"/>
</dbReference>
<dbReference type="SUPFAM" id="SSF51735">
    <property type="entry name" value="NAD(P)-binding Rossmann-fold domains"/>
    <property type="match status" value="1"/>
</dbReference>
<dbReference type="PROSITE" id="PS00071">
    <property type="entry name" value="GAPDH"/>
    <property type="match status" value="1"/>
</dbReference>
<accession>Q9HGY7</accession>
<accession>Q2UJ82</accession>
<accession>Q9C415</accession>
<evidence type="ECO:0000250" key="1"/>
<evidence type="ECO:0000255" key="2">
    <source>
        <dbReference type="PROSITE-ProRule" id="PRU10009"/>
    </source>
</evidence>
<evidence type="ECO:0000305" key="3"/>
<organism>
    <name type="scientific">Aspergillus oryzae (strain ATCC 42149 / RIB 40)</name>
    <name type="common">Yellow koji mold</name>
    <dbReference type="NCBI Taxonomy" id="510516"/>
    <lineage>
        <taxon>Eukaryota</taxon>
        <taxon>Fungi</taxon>
        <taxon>Dikarya</taxon>
        <taxon>Ascomycota</taxon>
        <taxon>Pezizomycotina</taxon>
        <taxon>Eurotiomycetes</taxon>
        <taxon>Eurotiomycetidae</taxon>
        <taxon>Eurotiales</taxon>
        <taxon>Aspergillaceae</taxon>
        <taxon>Aspergillus</taxon>
        <taxon>Aspergillus subgen. Circumdati</taxon>
    </lineage>
</organism>
<name>G3P_ASPOR</name>